<gene>
    <name evidence="5 6" type="primary">ttfA</name>
    <name evidence="5 6 8" type="ordered locus">MSMEG_0736</name>
    <name evidence="9" type="ordered locus">MSMEI_0720</name>
</gene>
<proteinExistence type="evidence at protein level"/>
<name>TTFA_MYCS2</name>
<dbReference type="EMBL" id="CP000480">
    <property type="protein sequence ID" value="ABK72891.1"/>
    <property type="molecule type" value="Genomic_DNA"/>
</dbReference>
<dbReference type="EMBL" id="CP001663">
    <property type="protein sequence ID" value="AFP37200.1"/>
    <property type="molecule type" value="Genomic_DNA"/>
</dbReference>
<dbReference type="RefSeq" id="WP_003892156.1">
    <property type="nucleotide sequence ID" value="NZ_SIJM01000036.1"/>
</dbReference>
<dbReference type="RefSeq" id="YP_885142.1">
    <property type="nucleotide sequence ID" value="NC_008596.1"/>
</dbReference>
<dbReference type="PDB" id="6T84">
    <property type="method" value="X-ray"/>
    <property type="resolution" value="1.40 A"/>
    <property type="chains" value="A=24-205"/>
</dbReference>
<dbReference type="PDBsum" id="6T84"/>
<dbReference type="SMR" id="A0QQF4"/>
<dbReference type="STRING" id="246196.MSMEG_0736"/>
<dbReference type="PaxDb" id="246196-MSMEI_0720"/>
<dbReference type="GeneID" id="93455646"/>
<dbReference type="KEGG" id="msb:LJ00_03655"/>
<dbReference type="KEGG" id="msg:MSMEI_0720"/>
<dbReference type="KEGG" id="msm:MSMEG_0736"/>
<dbReference type="PATRIC" id="fig|246196.19.peg.732"/>
<dbReference type="eggNOG" id="ENOG502ZNE6">
    <property type="taxonomic scope" value="Bacteria"/>
</dbReference>
<dbReference type="OrthoDB" id="4381784at2"/>
<dbReference type="Proteomes" id="UP000000757">
    <property type="component" value="Chromosome"/>
</dbReference>
<dbReference type="Proteomes" id="UP000006158">
    <property type="component" value="Chromosome"/>
</dbReference>
<dbReference type="GO" id="GO:0030428">
    <property type="term" value="C:cell septum"/>
    <property type="evidence" value="ECO:0007669"/>
    <property type="project" value="UniProtKB-SubCell"/>
</dbReference>
<dbReference type="GO" id="GO:0051286">
    <property type="term" value="C:cell tip"/>
    <property type="evidence" value="ECO:0007669"/>
    <property type="project" value="UniProtKB-SubCell"/>
</dbReference>
<dbReference type="GO" id="GO:0005886">
    <property type="term" value="C:plasma membrane"/>
    <property type="evidence" value="ECO:0007669"/>
    <property type="project" value="UniProtKB-SubCell"/>
</dbReference>
<dbReference type="GO" id="GO:0071555">
    <property type="term" value="P:cell wall organization"/>
    <property type="evidence" value="ECO:0007669"/>
    <property type="project" value="UniProtKB-KW"/>
</dbReference>
<dbReference type="GO" id="GO:0006869">
    <property type="term" value="P:lipid transport"/>
    <property type="evidence" value="ECO:0007669"/>
    <property type="project" value="UniProtKB-KW"/>
</dbReference>
<dbReference type="CDD" id="cd21904">
    <property type="entry name" value="TtfA-like"/>
    <property type="match status" value="1"/>
</dbReference>
<dbReference type="InterPro" id="IPR049724">
    <property type="entry name" value="Treh_trans_TtfA"/>
</dbReference>
<dbReference type="InterPro" id="IPR049726">
    <property type="entry name" value="TtfA-like_core"/>
</dbReference>
<dbReference type="NCBIfam" id="NF041276">
    <property type="entry name" value="treh_trans_TtfA"/>
    <property type="match status" value="1"/>
</dbReference>
<protein>
    <recommendedName>
        <fullName evidence="5 6">Trehalose monomycolate transport factor A</fullName>
    </recommendedName>
    <alternativeName>
        <fullName evidence="5 6">TMM transport factor A</fullName>
    </alternativeName>
</protein>
<sequence>MVPLWFTLSALCFVGAAVLLYVDIDRRRGLGRRRKSWAKSHGFDYEYESEDLLKRWKRGVMSTVGDVTAKNVVLGQIRGEAVFIFDIEEVATVIALHRKVGTNVVVDLRLKGLKEPRENDIWLLGAIGPRMVYSTNLDAARRACDRRMVTFAHTAPDCAEIMWNEQNWTLVAMPVTSNRAQWDEGLRTVRQFNDLLRVLPPVPQNGSQAALPRRGGSPSRPLAPTPAGRRELPPGRADVPPARGDVSRFAPRPEAGRSDAFRRPPPARNGREASHFQR</sequence>
<accession>A0QQF4</accession>
<accession>I7F6I5</accession>
<keyword id="KW-0002">3D-structure</keyword>
<keyword id="KW-0997">Cell inner membrane</keyword>
<keyword id="KW-1003">Cell membrane</keyword>
<keyword id="KW-0961">Cell wall biogenesis/degradation</keyword>
<keyword id="KW-0445">Lipid transport</keyword>
<keyword id="KW-0472">Membrane</keyword>
<keyword id="KW-1185">Reference proteome</keyword>
<keyword id="KW-0812">Transmembrane</keyword>
<keyword id="KW-1133">Transmembrane helix</keyword>
<keyword id="KW-0813">Transport</keyword>
<reference evidence="8 10" key="1">
    <citation type="submission" date="2006-10" db="EMBL/GenBank/DDBJ databases">
        <authorList>
            <person name="Fleischmann R.D."/>
            <person name="Dodson R.J."/>
            <person name="Haft D.H."/>
            <person name="Merkel J.S."/>
            <person name="Nelson W.C."/>
            <person name="Fraser C.M."/>
        </authorList>
    </citation>
    <scope>NUCLEOTIDE SEQUENCE [LARGE SCALE GENOMIC DNA]</scope>
    <source>
        <strain evidence="10">ATCC 700084 / mc(2)155</strain>
    </source>
</reference>
<reference evidence="9 11" key="2">
    <citation type="journal article" date="2007" name="Genome Biol.">
        <title>Interrupted coding sequences in Mycobacterium smegmatis: authentic mutations or sequencing errors?</title>
        <authorList>
            <person name="Deshayes C."/>
            <person name="Perrodou E."/>
            <person name="Gallien S."/>
            <person name="Euphrasie D."/>
            <person name="Schaeffer C."/>
            <person name="Van-Dorsselaer A."/>
            <person name="Poch O."/>
            <person name="Lecompte O."/>
            <person name="Reyrat J.-M."/>
        </authorList>
    </citation>
    <scope>NUCLEOTIDE SEQUENCE [LARGE SCALE GENOMIC DNA]</scope>
    <source>
        <strain evidence="11">ATCC 700084 / mc(2)155</strain>
    </source>
</reference>
<reference evidence="9 11" key="3">
    <citation type="journal article" date="2009" name="Genome Res.">
        <title>Ortho-proteogenomics: multiple proteomes investigation through orthology and a new MS-based protocol.</title>
        <authorList>
            <person name="Gallien S."/>
            <person name="Perrodou E."/>
            <person name="Carapito C."/>
            <person name="Deshayes C."/>
            <person name="Reyrat J.-M."/>
            <person name="Van Dorsselaer A."/>
            <person name="Poch O."/>
            <person name="Schaeffer C."/>
            <person name="Lecompte O."/>
        </authorList>
    </citation>
    <scope>NUCLEOTIDE SEQUENCE [LARGE SCALE GENOMIC DNA]</scope>
    <source>
        <strain evidence="11">ATCC 700084 / mc(2)155</strain>
    </source>
</reference>
<reference key="4">
    <citation type="journal article" date="2019" name="MBio">
        <title>Two Accessory Proteins Govern MmpL3 Mycolic Acid Transport in Mycobacteria.</title>
        <authorList>
            <person name="Fay A."/>
            <person name="Czudnochowski N."/>
            <person name="Rock J.M."/>
            <person name="Johnson J.R."/>
            <person name="Krogan N.J."/>
            <person name="Rosenberg O."/>
            <person name="Glickman M.S."/>
        </authorList>
    </citation>
    <scope>FUNCTION</scope>
    <scope>INTERACTION WITH MMPL3 AND MSMEG_5308</scope>
    <scope>SUBCELLULAR LOCATION</scope>
    <scope>DOMAIN</scope>
    <scope>IDENTIFICATION BY MASS SPECTROMETRY</scope>
    <scope>DISRUPTION PHENOTYPE</scope>
    <scope>TOPOLOGY</scope>
    <scope>MUTAGENESIS OF 1-MET--ASP-23; 24-ILE--ARG-278; 51-ASP--ARG-278; 101-GLY--ARG-278; 151-PHE--ARG-278 AND 206-GLY--ARG-278</scope>
    <source>
        <strain evidence="5">ATCC 700084 / mc(2)155</strain>
    </source>
</reference>
<reference evidence="12" key="5">
    <citation type="journal article" date="2020" name="Proteins">
        <title>The crystal structure of the mycobacterial trehalose monomycolate transport factor A, TtfA, reveals an atypical fold.</title>
        <authorList>
            <person name="Ung K.L."/>
            <person name="Alsarraf H.M.A.B."/>
            <person name="Kremer L."/>
            <person name="Blaise M."/>
        </authorList>
    </citation>
    <scope>X-RAY CRYSTALLOGRAPHY (1.40 ANGSTROMS) OF 24-205</scope>
    <scope>SUBUNIT</scope>
    <source>
        <strain evidence="6">ATCC 700084 / mc(2)155</strain>
    </source>
</reference>
<organism evidence="8">
    <name type="scientific">Mycolicibacterium smegmatis (strain ATCC 700084 / mc(2)155)</name>
    <name type="common">Mycobacterium smegmatis</name>
    <dbReference type="NCBI Taxonomy" id="246196"/>
    <lineage>
        <taxon>Bacteria</taxon>
        <taxon>Bacillati</taxon>
        <taxon>Actinomycetota</taxon>
        <taxon>Actinomycetes</taxon>
        <taxon>Mycobacteriales</taxon>
        <taxon>Mycobacteriaceae</taxon>
        <taxon>Mycolicibacterium</taxon>
    </lineage>
</organism>
<evidence type="ECO:0000255" key="1"/>
<evidence type="ECO:0000256" key="2">
    <source>
        <dbReference type="SAM" id="MobiDB-lite"/>
    </source>
</evidence>
<evidence type="ECO:0000269" key="3">
    <source>
    </source>
</evidence>
<evidence type="ECO:0000269" key="4">
    <source>
    </source>
</evidence>
<evidence type="ECO:0000303" key="5">
    <source>
    </source>
</evidence>
<evidence type="ECO:0000303" key="6">
    <source>
    </source>
</evidence>
<evidence type="ECO:0000305" key="7">
    <source>
    </source>
</evidence>
<evidence type="ECO:0000312" key="8">
    <source>
        <dbReference type="EMBL" id="ABK72891.1"/>
    </source>
</evidence>
<evidence type="ECO:0000312" key="9">
    <source>
        <dbReference type="EMBL" id="AFP37200.1"/>
    </source>
</evidence>
<evidence type="ECO:0000312" key="10">
    <source>
        <dbReference type="Proteomes" id="UP000000757"/>
    </source>
</evidence>
<evidence type="ECO:0000312" key="11">
    <source>
        <dbReference type="Proteomes" id="UP000006158"/>
    </source>
</evidence>
<evidence type="ECO:0007744" key="12">
    <source>
        <dbReference type="PDB" id="6T84"/>
    </source>
</evidence>
<evidence type="ECO:0007829" key="13">
    <source>
        <dbReference type="PDB" id="6T84"/>
    </source>
</evidence>
<feature type="chain" id="PRO_0000452603" description="Trehalose monomycolate transport factor A">
    <location>
        <begin position="1"/>
        <end position="278"/>
    </location>
</feature>
<feature type="topological domain" description="Periplasmic" evidence="7">
    <location>
        <position position="1"/>
    </location>
</feature>
<feature type="transmembrane region" description="Helical" evidence="1">
    <location>
        <begin position="2"/>
        <end position="22"/>
    </location>
</feature>
<feature type="topological domain" description="Cytoplasmic" evidence="7">
    <location>
        <begin position="23"/>
        <end position="278"/>
    </location>
</feature>
<feature type="region of interest" description="Disordered" evidence="2">
    <location>
        <begin position="200"/>
        <end position="278"/>
    </location>
</feature>
<feature type="compositionally biased region" description="Basic and acidic residues" evidence="2">
    <location>
        <begin position="269"/>
        <end position="278"/>
    </location>
</feature>
<feature type="mutagenesis site" description="No localization to poles or septa, loss of function complementation and interaction with MmpL3." evidence="3">
    <location>
        <begin position="1"/>
        <end position="23"/>
    </location>
</feature>
<feature type="mutagenesis site" description="No localization to poles or septa, loss of function complementation and interaction with MmpL3." evidence="3">
    <location>
        <begin position="24"/>
        <end position="278"/>
    </location>
</feature>
<feature type="mutagenesis site" description="No localization to poles or septa, loss of function complementation and interaction with MmpL3." evidence="3">
    <location>
        <begin position="51"/>
        <end position="278"/>
    </location>
</feature>
<feature type="mutagenesis site" description="No localization to poles or septa, loss of function complementation and interaction with MmpL3." evidence="3">
    <location>
        <begin position="101"/>
        <end position="278"/>
    </location>
</feature>
<feature type="mutagenesis site" description="No localization to poles or septa, loss of function complementation and interaction with MmpL3." evidence="3">
    <location>
        <begin position="151"/>
        <end position="278"/>
    </location>
</feature>
<feature type="mutagenesis site" description="Localizes to poles and septa in a pattern similar to the wild-type. Complements function. Interacts with MmpL3." evidence="3">
    <location>
        <begin position="206"/>
        <end position="278"/>
    </location>
</feature>
<feature type="helix" evidence="13">
    <location>
        <begin position="30"/>
        <end position="41"/>
    </location>
</feature>
<feature type="strand" evidence="13">
    <location>
        <begin position="44"/>
        <end position="51"/>
    </location>
</feature>
<feature type="helix" evidence="13">
    <location>
        <begin position="52"/>
        <end position="55"/>
    </location>
</feature>
<feature type="helix" evidence="13">
    <location>
        <begin position="59"/>
        <end position="61"/>
    </location>
</feature>
<feature type="strand" evidence="13">
    <location>
        <begin position="69"/>
        <end position="77"/>
    </location>
</feature>
<feature type="strand" evidence="13">
    <location>
        <begin position="80"/>
        <end position="87"/>
    </location>
</feature>
<feature type="turn" evidence="13">
    <location>
        <begin position="88"/>
        <end position="90"/>
    </location>
</feature>
<feature type="strand" evidence="13">
    <location>
        <begin position="91"/>
        <end position="97"/>
    </location>
</feature>
<feature type="strand" evidence="13">
    <location>
        <begin position="106"/>
        <end position="110"/>
    </location>
</feature>
<feature type="strand" evidence="13">
    <location>
        <begin position="122"/>
        <end position="127"/>
    </location>
</feature>
<feature type="strand" evidence="13">
    <location>
        <begin position="130"/>
        <end position="135"/>
    </location>
</feature>
<feature type="helix" evidence="13">
    <location>
        <begin position="137"/>
        <end position="143"/>
    </location>
</feature>
<feature type="helix" evidence="13">
    <location>
        <begin position="146"/>
        <end position="154"/>
    </location>
</feature>
<feature type="strand" evidence="13">
    <location>
        <begin position="161"/>
        <end position="164"/>
    </location>
</feature>
<feature type="strand" evidence="13">
    <location>
        <begin position="166"/>
        <end position="173"/>
    </location>
</feature>
<feature type="helix" evidence="13">
    <location>
        <begin position="179"/>
        <end position="195"/>
    </location>
</feature>
<feature type="helix" evidence="13">
    <location>
        <begin position="196"/>
        <end position="198"/>
    </location>
</feature>
<comment type="function">
    <text evidence="3">Required for MmpL3-dependent trehalose monomycolate (TMM) transport to the cell wall. Required for growth and cell elongation.</text>
</comment>
<comment type="subunit">
    <text evidence="3 4">Monomer (PubMed:31833106). Interacts (via N-terminus) with MmpL3; active trehalose monomycolate (TMM) biosynthesis is not required for the complex formation. Interacts with MSMEG_5308 (PubMed:31239378).</text>
</comment>
<comment type="subcellular location">
    <subcellularLocation>
        <location evidence="3">Cell inner membrane</location>
        <topology evidence="1">Single-pass membrane protein</topology>
    </subcellularLocation>
    <subcellularLocation>
        <location evidence="3">Cell septum</location>
    </subcellularLocation>
    <subcellularLocation>
        <location evidence="3">Cell tip</location>
    </subcellularLocation>
    <text evidence="3">Colocalizes with MmpL3 to the cell poles and septa. Trehalose monomycolate (TMM) synthesis is not required for localization to the poles or septa.</text>
</comment>
<comment type="domain">
    <text evidence="3">The N-terminal domain (1-205) is necessary and sufficient for proper localization and function of this protein, and for its interaction with MmpL3.</text>
</comment>
<comment type="disruption phenotype">
    <text evidence="3">Knockdown of this gene leads to cessation of growth and shorter misshapen cells. Accummulation of trehalose monomycolate (TMM) and lack of trehalose dimycolate (TDM). Accumulates MSMEG_5308 protein.</text>
</comment>